<proteinExistence type="inferred from homology"/>
<sequence length="102" mass="11609">MYAIIKHSGKQYKVSVGDELKLDHFEAESKASIEVSEVLAINDKELKVGAPFVAGAKVVLEVINHGKDKKVVIYKKRRRKDSKLKRGFRRQFTRVVVKDIKA</sequence>
<organism>
    <name type="scientific">Campylobacter jejuni subsp. jejuni serotype O:2 (strain ATCC 700819 / NCTC 11168)</name>
    <dbReference type="NCBI Taxonomy" id="192222"/>
    <lineage>
        <taxon>Bacteria</taxon>
        <taxon>Pseudomonadati</taxon>
        <taxon>Campylobacterota</taxon>
        <taxon>Epsilonproteobacteria</taxon>
        <taxon>Campylobacterales</taxon>
        <taxon>Campylobacteraceae</taxon>
        <taxon>Campylobacter</taxon>
    </lineage>
</organism>
<reference key="1">
    <citation type="journal article" date="2000" name="Nature">
        <title>The genome sequence of the food-borne pathogen Campylobacter jejuni reveals hypervariable sequences.</title>
        <authorList>
            <person name="Parkhill J."/>
            <person name="Wren B.W."/>
            <person name="Mungall K.L."/>
            <person name="Ketley J.M."/>
            <person name="Churcher C.M."/>
            <person name="Basham D."/>
            <person name="Chillingworth T."/>
            <person name="Davies R.M."/>
            <person name="Feltwell T."/>
            <person name="Holroyd S."/>
            <person name="Jagels K."/>
            <person name="Karlyshev A.V."/>
            <person name="Moule S."/>
            <person name="Pallen M.J."/>
            <person name="Penn C.W."/>
            <person name="Quail M.A."/>
            <person name="Rajandream M.A."/>
            <person name="Rutherford K.M."/>
            <person name="van Vliet A.H.M."/>
            <person name="Whitehead S."/>
            <person name="Barrell B.G."/>
        </authorList>
    </citation>
    <scope>NUCLEOTIDE SEQUENCE [LARGE SCALE GENOMIC DNA]</scope>
    <source>
        <strain>ATCC 700819 / NCTC 11168</strain>
    </source>
</reference>
<protein>
    <recommendedName>
        <fullName evidence="1">Large ribosomal subunit protein bL21</fullName>
    </recommendedName>
    <alternativeName>
        <fullName evidence="2">50S ribosomal protein L21</fullName>
    </alternativeName>
</protein>
<evidence type="ECO:0000255" key="1">
    <source>
        <dbReference type="HAMAP-Rule" id="MF_01363"/>
    </source>
</evidence>
<evidence type="ECO:0000305" key="2"/>
<name>RL21_CAMJE</name>
<comment type="function">
    <text evidence="1">This protein binds to 23S rRNA in the presence of protein L20.</text>
</comment>
<comment type="subunit">
    <text evidence="1">Part of the 50S ribosomal subunit. Contacts protein L20.</text>
</comment>
<comment type="similarity">
    <text evidence="1">Belongs to the bacterial ribosomal protein bL21 family.</text>
</comment>
<accession>Q0PC43</accession>
<keyword id="KW-1185">Reference proteome</keyword>
<keyword id="KW-0687">Ribonucleoprotein</keyword>
<keyword id="KW-0689">Ribosomal protein</keyword>
<keyword id="KW-0694">RNA-binding</keyword>
<keyword id="KW-0699">rRNA-binding</keyword>
<feature type="chain" id="PRO_0000270645" description="Large ribosomal subunit protein bL21">
    <location>
        <begin position="1"/>
        <end position="102"/>
    </location>
</feature>
<dbReference type="EMBL" id="AL111168">
    <property type="protein sequence ID" value="CAL34265.1"/>
    <property type="molecule type" value="Genomic_DNA"/>
</dbReference>
<dbReference type="PIR" id="F81425">
    <property type="entry name" value="F81425"/>
</dbReference>
<dbReference type="RefSeq" id="WP_002778820.1">
    <property type="nucleotide sequence ID" value="NZ_SZUC01000005.1"/>
</dbReference>
<dbReference type="RefSeq" id="YP_002343554.1">
    <property type="nucleotide sequence ID" value="NC_002163.1"/>
</dbReference>
<dbReference type="SMR" id="Q0PC43"/>
<dbReference type="IntAct" id="Q0PC43">
    <property type="interactions" value="19"/>
</dbReference>
<dbReference type="STRING" id="192222.Cj0094"/>
<dbReference type="PaxDb" id="192222-Cj0094"/>
<dbReference type="EnsemblBacteria" id="CAL34265">
    <property type="protein sequence ID" value="CAL34265"/>
    <property type="gene ID" value="Cj0094"/>
</dbReference>
<dbReference type="GeneID" id="904422"/>
<dbReference type="KEGG" id="cje:Cj0094"/>
<dbReference type="PATRIC" id="fig|192222.6.peg.92"/>
<dbReference type="eggNOG" id="COG0261">
    <property type="taxonomic scope" value="Bacteria"/>
</dbReference>
<dbReference type="HOGENOM" id="CLU_061463_3_1_7"/>
<dbReference type="OrthoDB" id="9813334at2"/>
<dbReference type="Proteomes" id="UP000000799">
    <property type="component" value="Chromosome"/>
</dbReference>
<dbReference type="GO" id="GO:0005737">
    <property type="term" value="C:cytoplasm"/>
    <property type="evidence" value="ECO:0007669"/>
    <property type="project" value="UniProtKB-ARBA"/>
</dbReference>
<dbReference type="GO" id="GO:1990904">
    <property type="term" value="C:ribonucleoprotein complex"/>
    <property type="evidence" value="ECO:0007669"/>
    <property type="project" value="UniProtKB-KW"/>
</dbReference>
<dbReference type="GO" id="GO:0005840">
    <property type="term" value="C:ribosome"/>
    <property type="evidence" value="ECO:0007669"/>
    <property type="project" value="UniProtKB-KW"/>
</dbReference>
<dbReference type="GO" id="GO:0019843">
    <property type="term" value="F:rRNA binding"/>
    <property type="evidence" value="ECO:0007669"/>
    <property type="project" value="UniProtKB-UniRule"/>
</dbReference>
<dbReference type="GO" id="GO:0003735">
    <property type="term" value="F:structural constituent of ribosome"/>
    <property type="evidence" value="ECO:0007669"/>
    <property type="project" value="InterPro"/>
</dbReference>
<dbReference type="GO" id="GO:0006412">
    <property type="term" value="P:translation"/>
    <property type="evidence" value="ECO:0007669"/>
    <property type="project" value="UniProtKB-UniRule"/>
</dbReference>
<dbReference type="HAMAP" id="MF_01363">
    <property type="entry name" value="Ribosomal_bL21"/>
    <property type="match status" value="1"/>
</dbReference>
<dbReference type="InterPro" id="IPR028909">
    <property type="entry name" value="bL21-like"/>
</dbReference>
<dbReference type="InterPro" id="IPR036164">
    <property type="entry name" value="bL21-like_sf"/>
</dbReference>
<dbReference type="InterPro" id="IPR001787">
    <property type="entry name" value="Ribosomal_bL21"/>
</dbReference>
<dbReference type="InterPro" id="IPR018258">
    <property type="entry name" value="Ribosomal_bL21_CS"/>
</dbReference>
<dbReference type="NCBIfam" id="TIGR00061">
    <property type="entry name" value="L21"/>
    <property type="match status" value="1"/>
</dbReference>
<dbReference type="PANTHER" id="PTHR21349">
    <property type="entry name" value="50S RIBOSOMAL PROTEIN L21"/>
    <property type="match status" value="1"/>
</dbReference>
<dbReference type="PANTHER" id="PTHR21349:SF0">
    <property type="entry name" value="LARGE RIBOSOMAL SUBUNIT PROTEIN BL21M"/>
    <property type="match status" value="1"/>
</dbReference>
<dbReference type="Pfam" id="PF00829">
    <property type="entry name" value="Ribosomal_L21p"/>
    <property type="match status" value="1"/>
</dbReference>
<dbReference type="SUPFAM" id="SSF141091">
    <property type="entry name" value="L21p-like"/>
    <property type="match status" value="1"/>
</dbReference>
<dbReference type="PROSITE" id="PS01169">
    <property type="entry name" value="RIBOSOMAL_L21"/>
    <property type="match status" value="1"/>
</dbReference>
<gene>
    <name evidence="1" type="primary">rplU</name>
    <name type="ordered locus">Cj0094</name>
</gene>